<proteinExistence type="inferred from homology"/>
<feature type="chain" id="PRO_0000382555" description="UPF0502 protein CJA_1529">
    <location>
        <begin position="1"/>
        <end position="218"/>
    </location>
</feature>
<organism>
    <name type="scientific">Cellvibrio japonicus (strain Ueda107)</name>
    <name type="common">Pseudomonas fluorescens subsp. cellulosa</name>
    <dbReference type="NCBI Taxonomy" id="498211"/>
    <lineage>
        <taxon>Bacteria</taxon>
        <taxon>Pseudomonadati</taxon>
        <taxon>Pseudomonadota</taxon>
        <taxon>Gammaproteobacteria</taxon>
        <taxon>Cellvibrionales</taxon>
        <taxon>Cellvibrionaceae</taxon>
        <taxon>Cellvibrio</taxon>
    </lineage>
</organism>
<evidence type="ECO:0000255" key="1">
    <source>
        <dbReference type="HAMAP-Rule" id="MF_01584"/>
    </source>
</evidence>
<keyword id="KW-1185">Reference proteome</keyword>
<accession>B3PE25</accession>
<protein>
    <recommendedName>
        <fullName evidence="1">UPF0502 protein CJA_1529</fullName>
    </recommendedName>
</protein>
<sequence length="218" mass="24771">MEFPLDPLLTPIEARVLGALMEKQLTTPDAYPLTLNSLLLACNQKTSREPVSHYESGEVQRCINELQERKLVEVDWGARAARYDQRLTRVVSLDKAAQALLCVMMLRGPQTLSELLTRTQRMFDFGSTQAIEEKLQHLCVKTHPAFMHIPRLAGQREDRYMHLLSGAPDLEALAAQTHNRSERNDDGRTQLEERVTLLENQLAELQAQVARLLEKSAE</sequence>
<name>Y1529_CELJU</name>
<reference key="1">
    <citation type="journal article" date="2008" name="J. Bacteriol.">
        <title>Insights into plant cell wall degradation from the genome sequence of the soil bacterium Cellvibrio japonicus.</title>
        <authorList>
            <person name="DeBoy R.T."/>
            <person name="Mongodin E.F."/>
            <person name="Fouts D.E."/>
            <person name="Tailford L.E."/>
            <person name="Khouri H."/>
            <person name="Emerson J.B."/>
            <person name="Mohamoud Y."/>
            <person name="Watkins K."/>
            <person name="Henrissat B."/>
            <person name="Gilbert H.J."/>
            <person name="Nelson K.E."/>
        </authorList>
    </citation>
    <scope>NUCLEOTIDE SEQUENCE [LARGE SCALE GENOMIC DNA]</scope>
    <source>
        <strain>Ueda107</strain>
    </source>
</reference>
<comment type="similarity">
    <text evidence="1">Belongs to the UPF0502 family.</text>
</comment>
<gene>
    <name type="ordered locus">CJA_1529</name>
</gene>
<dbReference type="EMBL" id="CP000934">
    <property type="protein sequence ID" value="ACE84316.1"/>
    <property type="molecule type" value="Genomic_DNA"/>
</dbReference>
<dbReference type="RefSeq" id="WP_012487159.1">
    <property type="nucleotide sequence ID" value="NC_010995.1"/>
</dbReference>
<dbReference type="SMR" id="B3PE25"/>
<dbReference type="KEGG" id="cja:CJA_1529"/>
<dbReference type="eggNOG" id="COG3132">
    <property type="taxonomic scope" value="Bacteria"/>
</dbReference>
<dbReference type="HOGENOM" id="CLU_057831_1_0_6"/>
<dbReference type="OrthoDB" id="9784785at2"/>
<dbReference type="Proteomes" id="UP000001036">
    <property type="component" value="Chromosome"/>
</dbReference>
<dbReference type="Gene3D" id="1.10.10.10">
    <property type="entry name" value="Winged helix-like DNA-binding domain superfamily/Winged helix DNA-binding domain"/>
    <property type="match status" value="2"/>
</dbReference>
<dbReference type="HAMAP" id="MF_01584">
    <property type="entry name" value="UPF0502"/>
    <property type="match status" value="1"/>
</dbReference>
<dbReference type="InterPro" id="IPR007432">
    <property type="entry name" value="DUF480"/>
</dbReference>
<dbReference type="InterPro" id="IPR036388">
    <property type="entry name" value="WH-like_DNA-bd_sf"/>
</dbReference>
<dbReference type="InterPro" id="IPR036390">
    <property type="entry name" value="WH_DNA-bd_sf"/>
</dbReference>
<dbReference type="PANTHER" id="PTHR38768">
    <property type="entry name" value="UPF0502 PROTEIN YCEH"/>
    <property type="match status" value="1"/>
</dbReference>
<dbReference type="PANTHER" id="PTHR38768:SF1">
    <property type="entry name" value="UPF0502 PROTEIN YCEH"/>
    <property type="match status" value="1"/>
</dbReference>
<dbReference type="Pfam" id="PF04337">
    <property type="entry name" value="DUF480"/>
    <property type="match status" value="1"/>
</dbReference>
<dbReference type="SUPFAM" id="SSF46785">
    <property type="entry name" value="Winged helix' DNA-binding domain"/>
    <property type="match status" value="2"/>
</dbReference>